<dbReference type="EMBL" id="AE014075">
    <property type="protein sequence ID" value="AAN79795.1"/>
    <property type="molecule type" value="Genomic_DNA"/>
</dbReference>
<dbReference type="RefSeq" id="WP_000749270.1">
    <property type="nucleotide sequence ID" value="NZ_CP051263.1"/>
</dbReference>
<dbReference type="SMR" id="Q8CW58"/>
<dbReference type="STRING" id="199310.c1322"/>
<dbReference type="KEGG" id="ecc:c1322"/>
<dbReference type="eggNOG" id="COG2353">
    <property type="taxonomic scope" value="Bacteria"/>
</dbReference>
<dbReference type="HOGENOM" id="CLU_071003_1_2_6"/>
<dbReference type="BioCyc" id="ECOL199310:C1322-MONOMER"/>
<dbReference type="Proteomes" id="UP000001410">
    <property type="component" value="Chromosome"/>
</dbReference>
<dbReference type="GO" id="GO:0042597">
    <property type="term" value="C:periplasmic space"/>
    <property type="evidence" value="ECO:0007669"/>
    <property type="project" value="UniProtKB-SubCell"/>
</dbReference>
<dbReference type="Gene3D" id="2.40.128.110">
    <property type="entry name" value="Lipid/polyisoprenoid-binding, YceI-like"/>
    <property type="match status" value="1"/>
</dbReference>
<dbReference type="HAMAP" id="MF_00780">
    <property type="entry name" value="UPF0312"/>
    <property type="match status" value="1"/>
</dbReference>
<dbReference type="InterPro" id="IPR007372">
    <property type="entry name" value="Lipid/polyisoprenoid-bd_YceI"/>
</dbReference>
<dbReference type="InterPro" id="IPR036761">
    <property type="entry name" value="TTHA0802/YceI-like_sf"/>
</dbReference>
<dbReference type="InterPro" id="IPR023480">
    <property type="entry name" value="UPF0312/YceI"/>
</dbReference>
<dbReference type="NCBIfam" id="NF002994">
    <property type="entry name" value="PRK03757.1"/>
    <property type="match status" value="1"/>
</dbReference>
<dbReference type="PANTHER" id="PTHR34406">
    <property type="entry name" value="PROTEIN YCEI"/>
    <property type="match status" value="1"/>
</dbReference>
<dbReference type="PANTHER" id="PTHR34406:SF1">
    <property type="entry name" value="PROTEIN YCEI"/>
    <property type="match status" value="1"/>
</dbReference>
<dbReference type="Pfam" id="PF04264">
    <property type="entry name" value="YceI"/>
    <property type="match status" value="1"/>
</dbReference>
<dbReference type="SMART" id="SM00867">
    <property type="entry name" value="YceI"/>
    <property type="match status" value="1"/>
</dbReference>
<dbReference type="SUPFAM" id="SSF101874">
    <property type="entry name" value="YceI-like"/>
    <property type="match status" value="1"/>
</dbReference>
<keyword id="KW-0574">Periplasm</keyword>
<keyword id="KW-1185">Reference proteome</keyword>
<keyword id="KW-0732">Signal</keyword>
<protein>
    <recommendedName>
        <fullName evidence="1">Protein YceI</fullName>
    </recommendedName>
</protein>
<reference key="1">
    <citation type="journal article" date="2002" name="Proc. Natl. Acad. Sci. U.S.A.">
        <title>Extensive mosaic structure revealed by the complete genome sequence of uropathogenic Escherichia coli.</title>
        <authorList>
            <person name="Welch R.A."/>
            <person name="Burland V."/>
            <person name="Plunkett G. III"/>
            <person name="Redford P."/>
            <person name="Roesch P."/>
            <person name="Rasko D."/>
            <person name="Buckles E.L."/>
            <person name="Liou S.-R."/>
            <person name="Boutin A."/>
            <person name="Hackett J."/>
            <person name="Stroud D."/>
            <person name="Mayhew G.F."/>
            <person name="Rose D.J."/>
            <person name="Zhou S."/>
            <person name="Schwartz D.C."/>
            <person name="Perna N.T."/>
            <person name="Mobley H.L.T."/>
            <person name="Donnenberg M.S."/>
            <person name="Blattner F.R."/>
        </authorList>
    </citation>
    <scope>NUCLEOTIDE SEQUENCE [LARGE SCALE GENOMIC DNA]</scope>
    <source>
        <strain>CFT073 / ATCC 700928 / UPEC</strain>
    </source>
</reference>
<gene>
    <name evidence="1" type="primary">yceI</name>
    <name type="ordered locus">c1322</name>
</gene>
<proteinExistence type="inferred from homology"/>
<sequence length="191" mass="20942">MKKSLLGLTFASLMFSAGSAVAADYKIDKEGQHAFVNFRIQHLGYSWLYGTFKDFDGTFTFDEKNPAADKVNVTINTTSVDTNHTERDKHLRSADFLNTAKYPQATFTSTSVKKDGDELDITGDLTLNGVTKPVTLEAKLIGQGDDPWGGKRAGFEAEGKIKLKDFNIKTDLGPASQEVDLIISVEGVQQK</sequence>
<feature type="signal peptide" evidence="1">
    <location>
        <begin position="1"/>
        <end position="22"/>
    </location>
</feature>
<feature type="chain" id="PRO_0000036278" description="Protein YceI">
    <location>
        <begin position="23"/>
        <end position="191"/>
    </location>
</feature>
<comment type="subcellular location">
    <subcellularLocation>
        <location evidence="1">Periplasm</location>
    </subcellularLocation>
</comment>
<comment type="similarity">
    <text evidence="1">Belongs to the UPF0312 family. Type 1 subfamily.</text>
</comment>
<name>YCEI_ECOL6</name>
<accession>Q8CW58</accession>
<evidence type="ECO:0000255" key="1">
    <source>
        <dbReference type="HAMAP-Rule" id="MF_00780"/>
    </source>
</evidence>
<organism>
    <name type="scientific">Escherichia coli O6:H1 (strain CFT073 / ATCC 700928 / UPEC)</name>
    <dbReference type="NCBI Taxonomy" id="199310"/>
    <lineage>
        <taxon>Bacteria</taxon>
        <taxon>Pseudomonadati</taxon>
        <taxon>Pseudomonadota</taxon>
        <taxon>Gammaproteobacteria</taxon>
        <taxon>Enterobacterales</taxon>
        <taxon>Enterobacteriaceae</taxon>
        <taxon>Escherichia</taxon>
    </lineage>
</organism>